<evidence type="ECO:0000305" key="1"/>
<comment type="function">
    <text>Involved in the transposition of the insertion sequence IS2.</text>
</comment>
<comment type="similarity">
    <text evidence="1">Belongs to the transposase 8 family.</text>
</comment>
<comment type="caution">
    <text evidence="1">There is no equivalent of this gene in strain K12 / MG1655.</text>
</comment>
<proteinExistence type="inferred from homology"/>
<accession>P0CF48</accession>
<accession>O07989</accession>
<accession>O08018</accession>
<accession>O08019</accession>
<accession>P0C5W2</accession>
<accession>P19776</accession>
<accession>P76357</accession>
<accession>P77346</accession>
<accession>Q2MBI5</accession>
<accession>Q2MC65</accession>
<accession>Q79BJ2</accession>
<accession>Q9JMT0</accession>
<gene>
    <name type="ordered locus">JW5902</name>
</gene>
<reference key="1">
    <citation type="journal article" date="2006" name="Mol. Syst. Biol.">
        <title>Highly accurate genome sequences of Escherichia coli K-12 strains MG1655 and W3110.</title>
        <authorList>
            <person name="Hayashi K."/>
            <person name="Morooka N."/>
            <person name="Yamamoto Y."/>
            <person name="Fujita K."/>
            <person name="Isono K."/>
            <person name="Choi S."/>
            <person name="Ohtsubo E."/>
            <person name="Baba T."/>
            <person name="Wanner B.L."/>
            <person name="Mori H."/>
            <person name="Horiuchi T."/>
        </authorList>
    </citation>
    <scope>NUCLEOTIDE SEQUENCE [LARGE SCALE GENOMIC DNA]</scope>
    <source>
        <strain>K12 / W3110 / ATCC 27325 / DSM 5911</strain>
    </source>
</reference>
<protein>
    <recommendedName>
        <fullName>Transposase InsC for insertion element IS2-9</fullName>
    </recommendedName>
</protein>
<dbReference type="EMBL" id="AP009048">
    <property type="protein sequence ID" value="BAA16036.2"/>
    <property type="molecule type" value="Genomic_DNA"/>
</dbReference>
<dbReference type="SMR" id="P0CF48"/>
<dbReference type="KEGG" id="ecj:JW5902"/>
<dbReference type="KEGG" id="ecoc:C3026_00670"/>
<dbReference type="KEGG" id="ecoc:C3026_03840"/>
<dbReference type="KEGG" id="ecoc:C3026_06235"/>
<dbReference type="KEGG" id="ecoc:C3026_08180"/>
<dbReference type="KEGG" id="ecoc:C3026_09100"/>
<dbReference type="KEGG" id="ecoc:C3026_11265"/>
<dbReference type="KEGG" id="ecoc:C3026_15305"/>
<dbReference type="KEGG" id="ecoc:C3026_15700"/>
<dbReference type="KEGG" id="ecoc:C3026_16625"/>
<dbReference type="KEGG" id="ecoc:C3026_20340"/>
<dbReference type="KEGG" id="ecoc:C3026_23040"/>
<dbReference type="KEGG" id="ecoc:C3026_24220"/>
<dbReference type="PATRIC" id="fig|83333.103.peg.1120"/>
<dbReference type="HOGENOM" id="CLU_027402_25_0_6"/>
<dbReference type="PhylomeDB" id="P0CF48"/>
<dbReference type="GO" id="GO:0003677">
    <property type="term" value="F:DNA binding"/>
    <property type="evidence" value="ECO:0007669"/>
    <property type="project" value="UniProtKB-KW"/>
</dbReference>
<dbReference type="GO" id="GO:0004803">
    <property type="term" value="F:transposase activity"/>
    <property type="evidence" value="ECO:0007669"/>
    <property type="project" value="InterPro"/>
</dbReference>
<dbReference type="GO" id="GO:0006313">
    <property type="term" value="P:DNA transposition"/>
    <property type="evidence" value="ECO:0007669"/>
    <property type="project" value="InterPro"/>
</dbReference>
<dbReference type="Gene3D" id="1.10.10.10">
    <property type="entry name" value="Winged helix-like DNA-binding domain superfamily/Winged helix DNA-binding domain"/>
    <property type="match status" value="1"/>
</dbReference>
<dbReference type="InterPro" id="IPR009057">
    <property type="entry name" value="Homeodomain-like_sf"/>
</dbReference>
<dbReference type="InterPro" id="IPR002514">
    <property type="entry name" value="Transposase_8"/>
</dbReference>
<dbReference type="InterPro" id="IPR036388">
    <property type="entry name" value="WH-like_DNA-bd_sf"/>
</dbReference>
<dbReference type="NCBIfam" id="NF006928">
    <property type="entry name" value="PRK09413.1"/>
    <property type="match status" value="1"/>
</dbReference>
<dbReference type="PANTHER" id="PTHR37936">
    <property type="entry name" value="TRANSPOSASE INSC FOR INSERTION ELEMENT IS2A-RELATED"/>
    <property type="match status" value="1"/>
</dbReference>
<dbReference type="PANTHER" id="PTHR37936:SF3">
    <property type="entry name" value="TRANSPOSASE INSC FOR INSERTION ELEMENT IS2A-RELATED"/>
    <property type="match status" value="1"/>
</dbReference>
<dbReference type="Pfam" id="PF01527">
    <property type="entry name" value="HTH_Tnp_1"/>
    <property type="match status" value="1"/>
</dbReference>
<dbReference type="SUPFAM" id="SSF46689">
    <property type="entry name" value="Homeodomain-like"/>
    <property type="match status" value="1"/>
</dbReference>
<organism>
    <name type="scientific">Escherichia coli (strain K12)</name>
    <dbReference type="NCBI Taxonomy" id="83333"/>
    <lineage>
        <taxon>Bacteria</taxon>
        <taxon>Pseudomonadati</taxon>
        <taxon>Pseudomonadota</taxon>
        <taxon>Gammaproteobacteria</taxon>
        <taxon>Enterobacterales</taxon>
        <taxon>Enterobacteriaceae</taxon>
        <taxon>Escherichia</taxon>
    </lineage>
</organism>
<keyword id="KW-0233">DNA recombination</keyword>
<keyword id="KW-0238">DNA-binding</keyword>
<keyword id="KW-0814">Transposable element</keyword>
<keyword id="KW-0815">Transposition</keyword>
<feature type="chain" id="PRO_0000393456" description="Transposase InsC for insertion element IS2-9">
    <location>
        <begin position="1"/>
        <end position="121"/>
    </location>
</feature>
<name>INSC9_ECOLI</name>
<sequence length="121" mass="13452">MIDVLGPEKRRRRTTQEKIAIVQQSFEPGMTVSLVARQHGVAASQLFLWRKQYQEGSLTAVAAGEQVVPASELAAAMKQIKELQRLLGKKTMENELLKEAVEYGRAKKWIAHAPLLPGDGE</sequence>